<accession>P0CB05</accession>
<comment type="function">
    <text evidence="4">Required for normal spindle assembly. Plays a key role in mother-centriole-dependent centriole duplication (PubMed:19182792). Plays a role in DNA damage response (PubMed:19182792). Following DNA damage, such as double-strand breaks (DSBs), is removed from centrosomes; this leads to the inactivation of spindle assembly and delay in mitotic progression (PubMed:19182792).</text>
</comment>
<comment type="subcellular location">
    <subcellularLocation>
        <location evidence="1">Cytoplasm</location>
        <location evidence="1">Cytoskeleton</location>
        <location evidence="1">Microtubule organizing center</location>
        <location evidence="1">Centrosome</location>
        <location evidence="1">Centriole</location>
    </subcellularLocation>
    <subcellularLocation>
        <location evidence="4">Cytoplasm</location>
        <location evidence="4">Cytoskeleton</location>
        <location evidence="4">Microtubule organizing center</location>
        <location evidence="4">Centrosome</location>
    </subcellularLocation>
</comment>
<comment type="similarity">
    <text evidence="5">Belongs to the CEP63 family.</text>
</comment>
<sequence>MEALLEGMQRNGQGSSGFLTSCEAELQELMKQIDIMVAHKKAEWEGQTQALEACLGVREQELSSARAALEEKHKEVGKLRQQLEDMEAAKQDLVREYEQQLKKFQEELARLRRSYEKLQKKQLREAREEATKRQGDDQCEMSRLSRKLEEFRQKSLDWEKQRLLYQQQVASLEAQRKALAEQSELIQTQLASRKQILESVELASRSEIQHLTSKLERANDTICANELEVERLNMRVDDLTENNRMILEDQQRVAEELRQSKKMLEVLQDEKMELRATLQSQEDFIDSSKLHQEQLQKELARVTETLHTKEILIRALEERLQEKQLSSPGLEHILLQLDVAQEKEQHLQAEVTHLEDSLVSSNARCVQLSEELAESIKELQSMEEHRAESKVEIKKLKEQLSQAEQIHRGELEGMRKEILRLTQELHQRDITIASAGGSTSDLEQRLRMEIERAERKAVEHRMILVQLETLKLENRHLSEMLEKVELGVLEGKDATLRALSEDYVVELNKLKSENQQLKKDLSEAREKLELTTQSQPEGTAQQLQSEEPEPRDVQHRPTQESQHKQDEQTEKIHHKPDKTTQHHQRWKIQPLPAEIPVAVIPEASVLPTQTSRKSCVESPTLAAGALQGTDSLLLVLDDSKGFPDATSRQSNHEQESVPLCPLPTSSVGSVAARYLEEEELRSQHILECLDAHIEELKKESEKIVRHFGHQE</sequence>
<dbReference type="EMBL" id="DN928209">
    <property type="status" value="NOT_ANNOTATED_CDS"/>
    <property type="molecule type" value="mRNA"/>
</dbReference>
<dbReference type="RefSeq" id="XP_015132426.1">
    <property type="nucleotide sequence ID" value="XM_015276940.1"/>
</dbReference>
<dbReference type="SMR" id="P0CB05"/>
<dbReference type="FunCoup" id="P0CB05">
    <property type="interactions" value="774"/>
</dbReference>
<dbReference type="STRING" id="9031.ENSGALP00000010701"/>
<dbReference type="PaxDb" id="9031-ENSGALP00000010701"/>
<dbReference type="VEuPathDB" id="HostDB:geneid_424873"/>
<dbReference type="eggNOG" id="ENOG502QRYU">
    <property type="taxonomic scope" value="Eukaryota"/>
</dbReference>
<dbReference type="HOGENOM" id="CLU_027471_0_0_1"/>
<dbReference type="InParanoid" id="P0CB05"/>
<dbReference type="OrthoDB" id="10007333at2759"/>
<dbReference type="PhylomeDB" id="P0CB05"/>
<dbReference type="Reactome" id="R-GGA-2565942">
    <property type="pathway name" value="Regulation of PLK1 Activity at G2/M Transition"/>
</dbReference>
<dbReference type="Reactome" id="R-GGA-380259">
    <property type="pathway name" value="Loss of Nlp from mitotic centrosomes"/>
</dbReference>
<dbReference type="Reactome" id="R-GGA-380270">
    <property type="pathway name" value="Recruitment of mitotic centrosome proteins and complexes"/>
</dbReference>
<dbReference type="Reactome" id="R-GGA-380284">
    <property type="pathway name" value="Loss of proteins required for interphase microtubule organization from the centrosome"/>
</dbReference>
<dbReference type="Reactome" id="R-GGA-380320">
    <property type="pathway name" value="Recruitment of NuMA to mitotic centrosomes"/>
</dbReference>
<dbReference type="Reactome" id="R-GGA-5620912">
    <property type="pathway name" value="Anchoring of the basal body to the plasma membrane"/>
</dbReference>
<dbReference type="Reactome" id="R-GGA-8854518">
    <property type="pathway name" value="AURKA Activation by TPX2"/>
</dbReference>
<dbReference type="PRO" id="PR:P0CB05"/>
<dbReference type="Proteomes" id="UP000000539">
    <property type="component" value="Chromosome 9"/>
</dbReference>
<dbReference type="Bgee" id="ENSGALG00000006632">
    <property type="expression patterns" value="Expressed in ovary and 13 other cell types or tissues"/>
</dbReference>
<dbReference type="GO" id="GO:0005814">
    <property type="term" value="C:centriole"/>
    <property type="evidence" value="ECO:0000250"/>
    <property type="project" value="UniProtKB"/>
</dbReference>
<dbReference type="GO" id="GO:0005813">
    <property type="term" value="C:centrosome"/>
    <property type="evidence" value="ECO:0000314"/>
    <property type="project" value="UniProtKB"/>
</dbReference>
<dbReference type="GO" id="GO:0005737">
    <property type="term" value="C:cytoplasm"/>
    <property type="evidence" value="ECO:0007669"/>
    <property type="project" value="UniProtKB-KW"/>
</dbReference>
<dbReference type="GO" id="GO:0000922">
    <property type="term" value="C:spindle pole"/>
    <property type="evidence" value="ECO:0000314"/>
    <property type="project" value="UniProtKB"/>
</dbReference>
<dbReference type="GO" id="GO:0051301">
    <property type="term" value="P:cell division"/>
    <property type="evidence" value="ECO:0007669"/>
    <property type="project" value="UniProtKB-KW"/>
</dbReference>
<dbReference type="GO" id="GO:0007099">
    <property type="term" value="P:centriole replication"/>
    <property type="evidence" value="ECO:0000250"/>
    <property type="project" value="UniProtKB"/>
</dbReference>
<dbReference type="GO" id="GO:0098535">
    <property type="term" value="P:de novo centriole assembly involved in multi-ciliated epithelial cell differentiation"/>
    <property type="evidence" value="ECO:0000318"/>
    <property type="project" value="GO_Central"/>
</dbReference>
<dbReference type="GO" id="GO:0000077">
    <property type="term" value="P:DNA damage checkpoint signaling"/>
    <property type="evidence" value="ECO:0000315"/>
    <property type="project" value="UniProtKB"/>
</dbReference>
<dbReference type="GO" id="GO:0042770">
    <property type="term" value="P:signal transduction in response to DNA damage"/>
    <property type="evidence" value="ECO:0000315"/>
    <property type="project" value="UniProtKB"/>
</dbReference>
<dbReference type="GO" id="GO:0051225">
    <property type="term" value="P:spindle assembly"/>
    <property type="evidence" value="ECO:0000315"/>
    <property type="project" value="UniProtKB"/>
</dbReference>
<dbReference type="InterPro" id="IPR031470">
    <property type="entry name" value="Cep63/Deup1_N"/>
</dbReference>
<dbReference type="PANTHER" id="PTHR18875:SF7">
    <property type="entry name" value="CENTROSOMAL PROTEIN OF 63 KDA"/>
    <property type="match status" value="1"/>
</dbReference>
<dbReference type="PANTHER" id="PTHR18875">
    <property type="entry name" value="SARCOMA ANTIGEN NY-SAR-24/CYTOSKELETAL PROTEIN SOJO"/>
    <property type="match status" value="1"/>
</dbReference>
<dbReference type="Pfam" id="PF17045">
    <property type="entry name" value="CEP63"/>
    <property type="match status" value="1"/>
</dbReference>
<reference key="1">
    <citation type="journal article" date="2004" name="Nature">
        <title>Sequence and comparative analysis of the chicken genome provide unique perspectives on vertebrate evolution.</title>
        <authorList>
            <person name="Hillier L.W."/>
            <person name="Miller W."/>
            <person name="Birney E."/>
            <person name="Warren W."/>
            <person name="Hardison R.C."/>
            <person name="Ponting C.P."/>
            <person name="Bork P."/>
            <person name="Burt D.W."/>
            <person name="Groenen M.A.M."/>
            <person name="Delany M.E."/>
            <person name="Dodgson J.B."/>
            <person name="Chinwalla A.T."/>
            <person name="Cliften P.F."/>
            <person name="Clifton S.W."/>
            <person name="Delehaunty K.D."/>
            <person name="Fronick C."/>
            <person name="Fulton R.S."/>
            <person name="Graves T.A."/>
            <person name="Kremitzki C."/>
            <person name="Layman D."/>
            <person name="Magrini V."/>
            <person name="McPherson J.D."/>
            <person name="Miner T.L."/>
            <person name="Minx P."/>
            <person name="Nash W.E."/>
            <person name="Nhan M.N."/>
            <person name="Nelson J.O."/>
            <person name="Oddy L.G."/>
            <person name="Pohl C.S."/>
            <person name="Randall-Maher J."/>
            <person name="Smith S.M."/>
            <person name="Wallis J.W."/>
            <person name="Yang S.-P."/>
            <person name="Romanov M.N."/>
            <person name="Rondelli C.M."/>
            <person name="Paton B."/>
            <person name="Smith J."/>
            <person name="Morrice D."/>
            <person name="Daniels L."/>
            <person name="Tempest H.G."/>
            <person name="Robertson L."/>
            <person name="Masabanda J.S."/>
            <person name="Griffin D.K."/>
            <person name="Vignal A."/>
            <person name="Fillon V."/>
            <person name="Jacobbson L."/>
            <person name="Kerje S."/>
            <person name="Andersson L."/>
            <person name="Crooijmans R.P."/>
            <person name="Aerts J."/>
            <person name="van der Poel J.J."/>
            <person name="Ellegren H."/>
            <person name="Caldwell R.B."/>
            <person name="Hubbard S.J."/>
            <person name="Grafham D.V."/>
            <person name="Kierzek A.M."/>
            <person name="McLaren S.R."/>
            <person name="Overton I.M."/>
            <person name="Arakawa H."/>
            <person name="Beattie K.J."/>
            <person name="Bezzubov Y."/>
            <person name="Boardman P.E."/>
            <person name="Bonfield J.K."/>
            <person name="Croning M.D.R."/>
            <person name="Davies R.M."/>
            <person name="Francis M.D."/>
            <person name="Humphray S.J."/>
            <person name="Scott C.E."/>
            <person name="Taylor R.G."/>
            <person name="Tickle C."/>
            <person name="Brown W.R.A."/>
            <person name="Rogers J."/>
            <person name="Buerstedde J.-M."/>
            <person name="Wilson S.A."/>
            <person name="Stubbs L."/>
            <person name="Ovcharenko I."/>
            <person name="Gordon L."/>
            <person name="Lucas S."/>
            <person name="Miller M.M."/>
            <person name="Inoko H."/>
            <person name="Shiina T."/>
            <person name="Kaufman J."/>
            <person name="Salomonsen J."/>
            <person name="Skjoedt K."/>
            <person name="Wong G.K.-S."/>
            <person name="Wang J."/>
            <person name="Liu B."/>
            <person name="Wang J."/>
            <person name="Yu J."/>
            <person name="Yang H."/>
            <person name="Nefedov M."/>
            <person name="Koriabine M."/>
            <person name="Dejong P.J."/>
            <person name="Goodstadt L."/>
            <person name="Webber C."/>
            <person name="Dickens N.J."/>
            <person name="Letunic I."/>
            <person name="Suyama M."/>
            <person name="Torrents D."/>
            <person name="von Mering C."/>
            <person name="Zdobnov E.M."/>
            <person name="Makova K."/>
            <person name="Nekrutenko A."/>
            <person name="Elnitski L."/>
            <person name="Eswara P."/>
            <person name="King D.C."/>
            <person name="Yang S.-P."/>
            <person name="Tyekucheva S."/>
            <person name="Radakrishnan A."/>
            <person name="Harris R.S."/>
            <person name="Chiaromonte F."/>
            <person name="Taylor J."/>
            <person name="He J."/>
            <person name="Rijnkels M."/>
            <person name="Griffiths-Jones S."/>
            <person name="Ureta-Vidal A."/>
            <person name="Hoffman M.M."/>
            <person name="Severin J."/>
            <person name="Searle S.M.J."/>
            <person name="Law A.S."/>
            <person name="Speed D."/>
            <person name="Waddington D."/>
            <person name="Cheng Z."/>
            <person name="Tuzun E."/>
            <person name="Eichler E."/>
            <person name="Bao Z."/>
            <person name="Flicek P."/>
            <person name="Shteynberg D.D."/>
            <person name="Brent M.R."/>
            <person name="Bye J.M."/>
            <person name="Huckle E.J."/>
            <person name="Chatterji S."/>
            <person name="Dewey C."/>
            <person name="Pachter L."/>
            <person name="Kouranov A."/>
            <person name="Mourelatos Z."/>
            <person name="Hatzigeorgiou A.G."/>
            <person name="Paterson A.H."/>
            <person name="Ivarie R."/>
            <person name="Brandstrom M."/>
            <person name="Axelsson E."/>
            <person name="Backstrom N."/>
            <person name="Berlin S."/>
            <person name="Webster M.T."/>
            <person name="Pourquie O."/>
            <person name="Reymond A."/>
            <person name="Ucla C."/>
            <person name="Antonarakis S.E."/>
            <person name="Long M."/>
            <person name="Emerson J.J."/>
            <person name="Betran E."/>
            <person name="Dupanloup I."/>
            <person name="Kaessmann H."/>
            <person name="Hinrichs A.S."/>
            <person name="Bejerano G."/>
            <person name="Furey T.S."/>
            <person name="Harte R.A."/>
            <person name="Raney B."/>
            <person name="Siepel A."/>
            <person name="Kent W.J."/>
            <person name="Haussler D."/>
            <person name="Eyras E."/>
            <person name="Castelo R."/>
            <person name="Abril J.F."/>
            <person name="Castellano S."/>
            <person name="Camara F."/>
            <person name="Parra G."/>
            <person name="Guigo R."/>
            <person name="Bourque G."/>
            <person name="Tesler G."/>
            <person name="Pevzner P.A."/>
            <person name="Smit A."/>
            <person name="Fulton L.A."/>
            <person name="Mardis E.R."/>
            <person name="Wilson R.K."/>
        </authorList>
    </citation>
    <scope>NUCLEOTIDE SEQUENCE [LARGE SCALE GENOMIC DNA]</scope>
    <source>
        <strain>Red jungle fowl</strain>
    </source>
</reference>
<reference key="2">
    <citation type="submission" date="2005-04" db="EMBL/GenBank/DDBJ databases">
        <title>Characterization of expressed sequence tags generated from multiple chicken tissues.</title>
        <authorList>
            <person name="Evock-Clover C.M."/>
            <person name="Ashwell C.M."/>
            <person name="McMurtry J.P."/>
            <person name="Lillehoj H.S."/>
            <person name="Matukumalli L.K."/>
            <person name="Van Tassell C.P."/>
        </authorList>
    </citation>
    <scope>NUCLEOTIDE SEQUENCE [MRNA] OF 59-248</scope>
</reference>
<reference key="3">
    <citation type="journal article" date="2009" name="Nat. Cell Biol.">
        <title>An ATM- and ATR-dependent checkpoint inactivates spindle assembly by targeting CEP63.</title>
        <authorList>
            <person name="Smith E."/>
            <person name="Dejsuphong D."/>
            <person name="Balestrini A."/>
            <person name="Hampel M."/>
            <person name="Lenz C."/>
            <person name="Takeda S."/>
            <person name="Vindigni A."/>
            <person name="Costanzo V."/>
        </authorList>
    </citation>
    <scope>FUNCTION</scope>
    <scope>SUBCELLULAR LOCATION</scope>
</reference>
<protein>
    <recommendedName>
        <fullName>Centrosomal protein of 63 kDa</fullName>
        <shortName>Cep63</shortName>
    </recommendedName>
</protein>
<feature type="chain" id="PRO_0000381807" description="Centrosomal protein of 63 kDa">
    <location>
        <begin position="1"/>
        <end position="711"/>
    </location>
</feature>
<feature type="region of interest" description="Disordered" evidence="3">
    <location>
        <begin position="529"/>
        <end position="585"/>
    </location>
</feature>
<feature type="coiled-coil region" evidence="2">
    <location>
        <begin position="23"/>
        <end position="192"/>
    </location>
</feature>
<feature type="coiled-coil region" evidence="2">
    <location>
        <begin position="224"/>
        <end position="535"/>
    </location>
</feature>
<feature type="compositionally biased region" description="Polar residues" evidence="3">
    <location>
        <begin position="530"/>
        <end position="545"/>
    </location>
</feature>
<feature type="compositionally biased region" description="Basic and acidic residues" evidence="3">
    <location>
        <begin position="548"/>
        <end position="571"/>
    </location>
</feature>
<feature type="compositionally biased region" description="Basic residues" evidence="3">
    <location>
        <begin position="572"/>
        <end position="585"/>
    </location>
</feature>
<keyword id="KW-0131">Cell cycle</keyword>
<keyword id="KW-0132">Cell division</keyword>
<keyword id="KW-0175">Coiled coil</keyword>
<keyword id="KW-0963">Cytoplasm</keyword>
<keyword id="KW-0206">Cytoskeleton</keyword>
<keyword id="KW-0227">DNA damage</keyword>
<keyword id="KW-0498">Mitosis</keyword>
<keyword id="KW-1185">Reference proteome</keyword>
<organism>
    <name type="scientific">Gallus gallus</name>
    <name type="common">Chicken</name>
    <dbReference type="NCBI Taxonomy" id="9031"/>
    <lineage>
        <taxon>Eukaryota</taxon>
        <taxon>Metazoa</taxon>
        <taxon>Chordata</taxon>
        <taxon>Craniata</taxon>
        <taxon>Vertebrata</taxon>
        <taxon>Euteleostomi</taxon>
        <taxon>Archelosauria</taxon>
        <taxon>Archosauria</taxon>
        <taxon>Dinosauria</taxon>
        <taxon>Saurischia</taxon>
        <taxon>Theropoda</taxon>
        <taxon>Coelurosauria</taxon>
        <taxon>Aves</taxon>
        <taxon>Neognathae</taxon>
        <taxon>Galloanserae</taxon>
        <taxon>Galliformes</taxon>
        <taxon>Phasianidae</taxon>
        <taxon>Phasianinae</taxon>
        <taxon>Gallus</taxon>
    </lineage>
</organism>
<evidence type="ECO:0000250" key="1">
    <source>
        <dbReference type="UniProtKB" id="Q96MT8"/>
    </source>
</evidence>
<evidence type="ECO:0000255" key="2"/>
<evidence type="ECO:0000256" key="3">
    <source>
        <dbReference type="SAM" id="MobiDB-lite"/>
    </source>
</evidence>
<evidence type="ECO:0000269" key="4">
    <source>
    </source>
</evidence>
<evidence type="ECO:0000305" key="5"/>
<gene>
    <name type="primary">CEP63</name>
</gene>
<name>CEP63_CHICK</name>
<proteinExistence type="evidence at transcript level"/>